<comment type="function">
    <text evidence="1">Catalyzes the phosphorylation of pantothenate (Pan), the first step in CoA biosynthesis.</text>
</comment>
<comment type="catalytic activity">
    <reaction evidence="1">
        <text>(R)-pantothenate + ATP = (R)-4'-phosphopantothenate + ADP + H(+)</text>
        <dbReference type="Rhea" id="RHEA:16373"/>
        <dbReference type="ChEBI" id="CHEBI:10986"/>
        <dbReference type="ChEBI" id="CHEBI:15378"/>
        <dbReference type="ChEBI" id="CHEBI:29032"/>
        <dbReference type="ChEBI" id="CHEBI:30616"/>
        <dbReference type="ChEBI" id="CHEBI:456216"/>
        <dbReference type="EC" id="2.7.1.33"/>
    </reaction>
</comment>
<comment type="cofactor">
    <cofactor evidence="1">
        <name>NH4(+)</name>
        <dbReference type="ChEBI" id="CHEBI:28938"/>
    </cofactor>
    <cofactor evidence="1">
        <name>K(+)</name>
        <dbReference type="ChEBI" id="CHEBI:29103"/>
    </cofactor>
    <text evidence="1">A monovalent cation. Ammonium or potassium.</text>
</comment>
<comment type="pathway">
    <text evidence="1">Cofactor biosynthesis; coenzyme A biosynthesis; CoA from (R)-pantothenate: step 1/5.</text>
</comment>
<comment type="subunit">
    <text evidence="1">Homodimer.</text>
</comment>
<comment type="subcellular location">
    <subcellularLocation>
        <location evidence="1">Cytoplasm</location>
    </subcellularLocation>
</comment>
<comment type="similarity">
    <text evidence="1">Belongs to the type III pantothenate kinase family.</text>
</comment>
<reference key="1">
    <citation type="journal article" date="2004" name="Nucleic Acids Res.">
        <title>Genome sequence of Symbiobacterium thermophilum, an uncultivable bacterium that depends on microbial commensalism.</title>
        <authorList>
            <person name="Ueda K."/>
            <person name="Yamashita A."/>
            <person name="Ishikawa J."/>
            <person name="Shimada M."/>
            <person name="Watsuji T."/>
            <person name="Morimura K."/>
            <person name="Ikeda H."/>
            <person name="Hattori M."/>
            <person name="Beppu T."/>
        </authorList>
    </citation>
    <scope>NUCLEOTIDE SEQUENCE [LARGE SCALE GENOMIC DNA]</scope>
    <source>
        <strain>DSM 24528 / JCM 14929 / IAM 14863 / T</strain>
    </source>
</reference>
<accession>Q67JI5</accession>
<name>COAX1_SYMTH</name>
<feature type="chain" id="PRO_0000267593" description="Type III pantothenate kinase 1">
    <location>
        <begin position="1"/>
        <end position="268"/>
    </location>
</feature>
<feature type="active site" description="Proton acceptor" evidence="1">
    <location>
        <position position="109"/>
    </location>
</feature>
<feature type="binding site" evidence="1">
    <location>
        <begin position="6"/>
        <end position="13"/>
    </location>
    <ligand>
        <name>ATP</name>
        <dbReference type="ChEBI" id="CHEBI:30616"/>
    </ligand>
</feature>
<feature type="binding site" evidence="1">
    <location>
        <position position="100"/>
    </location>
    <ligand>
        <name>substrate</name>
    </ligand>
</feature>
<feature type="binding site" evidence="1">
    <location>
        <begin position="107"/>
        <end position="110"/>
    </location>
    <ligand>
        <name>substrate</name>
    </ligand>
</feature>
<feature type="binding site" evidence="1">
    <location>
        <position position="133"/>
    </location>
    <ligand>
        <name>K(+)</name>
        <dbReference type="ChEBI" id="CHEBI:29103"/>
    </ligand>
</feature>
<feature type="binding site" evidence="1">
    <location>
        <position position="136"/>
    </location>
    <ligand>
        <name>ATP</name>
        <dbReference type="ChEBI" id="CHEBI:30616"/>
    </ligand>
</feature>
<organism>
    <name type="scientific">Symbiobacterium thermophilum (strain DSM 24528 / JCM 14929 / IAM 14863 / T)</name>
    <dbReference type="NCBI Taxonomy" id="292459"/>
    <lineage>
        <taxon>Bacteria</taxon>
        <taxon>Bacillati</taxon>
        <taxon>Bacillota</taxon>
        <taxon>Clostridia</taxon>
        <taxon>Eubacteriales</taxon>
        <taxon>Symbiobacteriaceae</taxon>
        <taxon>Symbiobacterium</taxon>
    </lineage>
</organism>
<dbReference type="EC" id="2.7.1.33" evidence="1"/>
<dbReference type="EMBL" id="AP006840">
    <property type="protein sequence ID" value="BAD42165.1"/>
    <property type="molecule type" value="Genomic_DNA"/>
</dbReference>
<dbReference type="RefSeq" id="WP_011197296.1">
    <property type="nucleotide sequence ID" value="NC_006177.1"/>
</dbReference>
<dbReference type="SMR" id="Q67JI5"/>
<dbReference type="STRING" id="292459.STH3183"/>
<dbReference type="KEGG" id="sth:STH3183"/>
<dbReference type="eggNOG" id="COG1521">
    <property type="taxonomic scope" value="Bacteria"/>
</dbReference>
<dbReference type="HOGENOM" id="CLU_066627_1_0_9"/>
<dbReference type="OrthoDB" id="9804707at2"/>
<dbReference type="UniPathway" id="UPA00241">
    <property type="reaction ID" value="UER00352"/>
</dbReference>
<dbReference type="Proteomes" id="UP000000417">
    <property type="component" value="Chromosome"/>
</dbReference>
<dbReference type="GO" id="GO:0005737">
    <property type="term" value="C:cytoplasm"/>
    <property type="evidence" value="ECO:0007669"/>
    <property type="project" value="UniProtKB-SubCell"/>
</dbReference>
<dbReference type="GO" id="GO:0005524">
    <property type="term" value="F:ATP binding"/>
    <property type="evidence" value="ECO:0007669"/>
    <property type="project" value="UniProtKB-UniRule"/>
</dbReference>
<dbReference type="GO" id="GO:0046872">
    <property type="term" value="F:metal ion binding"/>
    <property type="evidence" value="ECO:0007669"/>
    <property type="project" value="UniProtKB-KW"/>
</dbReference>
<dbReference type="GO" id="GO:0004594">
    <property type="term" value="F:pantothenate kinase activity"/>
    <property type="evidence" value="ECO:0007669"/>
    <property type="project" value="UniProtKB-UniRule"/>
</dbReference>
<dbReference type="GO" id="GO:0015937">
    <property type="term" value="P:coenzyme A biosynthetic process"/>
    <property type="evidence" value="ECO:0007669"/>
    <property type="project" value="UniProtKB-UniRule"/>
</dbReference>
<dbReference type="CDD" id="cd24015">
    <property type="entry name" value="ASKHA_NBD_PanK-III"/>
    <property type="match status" value="1"/>
</dbReference>
<dbReference type="Gene3D" id="3.30.420.40">
    <property type="match status" value="2"/>
</dbReference>
<dbReference type="HAMAP" id="MF_01274">
    <property type="entry name" value="Pantothen_kinase_3"/>
    <property type="match status" value="1"/>
</dbReference>
<dbReference type="InterPro" id="IPR043129">
    <property type="entry name" value="ATPase_NBD"/>
</dbReference>
<dbReference type="InterPro" id="IPR004619">
    <property type="entry name" value="Type_III_PanK"/>
</dbReference>
<dbReference type="NCBIfam" id="TIGR00671">
    <property type="entry name" value="baf"/>
    <property type="match status" value="1"/>
</dbReference>
<dbReference type="NCBIfam" id="NF009855">
    <property type="entry name" value="PRK13321.1"/>
    <property type="match status" value="1"/>
</dbReference>
<dbReference type="PANTHER" id="PTHR34265">
    <property type="entry name" value="TYPE III PANTOTHENATE KINASE"/>
    <property type="match status" value="1"/>
</dbReference>
<dbReference type="PANTHER" id="PTHR34265:SF1">
    <property type="entry name" value="TYPE III PANTOTHENATE KINASE"/>
    <property type="match status" value="1"/>
</dbReference>
<dbReference type="Pfam" id="PF03309">
    <property type="entry name" value="Pan_kinase"/>
    <property type="match status" value="1"/>
</dbReference>
<dbReference type="SUPFAM" id="SSF53067">
    <property type="entry name" value="Actin-like ATPase domain"/>
    <property type="match status" value="2"/>
</dbReference>
<protein>
    <recommendedName>
        <fullName evidence="1">Type III pantothenate kinase 1</fullName>
        <ecNumber evidence="1">2.7.1.33</ecNumber>
    </recommendedName>
    <alternativeName>
        <fullName evidence="1">PanK-III 1</fullName>
    </alternativeName>
    <alternativeName>
        <fullName evidence="1">Pantothenic acid kinase 1</fullName>
    </alternativeName>
</protein>
<gene>
    <name evidence="1" type="primary">coaX1</name>
    <name type="ordered locus">STH3183</name>
</gene>
<proteinExistence type="inferred from homology"/>
<sequence>MLLAVDIGNTNITAGLFLEDELICMWRMASNRAETWDEYGLQLIQLLERDGHTPADITCAAMASVVPPLNPVLSRAVQQYLKVQLKELTGDLRSLPAVRYDNPAALGTDRLVNALAGWEIYGRPQGRPVIVVDFGTATKLECVSAEGEYLGGVIAPGIRTAAEALTRRTALLQRVEIQRPKSVIGRNIAASMQSGILYGFAGLADGLVRRLTQEIAPDGPDPVVVATGGLASMVAVESRTIQMVDPHLTLQGIRLMYELNWPDAAAEA</sequence>
<keyword id="KW-0067">ATP-binding</keyword>
<keyword id="KW-0173">Coenzyme A biosynthesis</keyword>
<keyword id="KW-0963">Cytoplasm</keyword>
<keyword id="KW-0418">Kinase</keyword>
<keyword id="KW-0479">Metal-binding</keyword>
<keyword id="KW-0547">Nucleotide-binding</keyword>
<keyword id="KW-0630">Potassium</keyword>
<keyword id="KW-1185">Reference proteome</keyword>
<keyword id="KW-0808">Transferase</keyword>
<evidence type="ECO:0000255" key="1">
    <source>
        <dbReference type="HAMAP-Rule" id="MF_01274"/>
    </source>
</evidence>